<name>ENSA_PIG</name>
<keyword id="KW-0007">Acetylation</keyword>
<keyword id="KW-0131">Cell cycle</keyword>
<keyword id="KW-0132">Cell division</keyword>
<keyword id="KW-0963">Cytoplasm</keyword>
<keyword id="KW-0903">Direct protein sequencing</keyword>
<keyword id="KW-0498">Mitosis</keyword>
<keyword id="KW-0597">Phosphoprotein</keyword>
<keyword id="KW-0650">Protein phosphatase inhibitor</keyword>
<keyword id="KW-1185">Reference proteome</keyword>
<evidence type="ECO:0000250" key="1"/>
<evidence type="ECO:0000250" key="2">
    <source>
        <dbReference type="UniProtKB" id="O43768"/>
    </source>
</evidence>
<evidence type="ECO:0000256" key="3">
    <source>
        <dbReference type="SAM" id="MobiDB-lite"/>
    </source>
</evidence>
<evidence type="ECO:0000269" key="4">
    <source>
    </source>
</evidence>
<evidence type="ECO:0000305" key="5"/>
<reference key="1">
    <citation type="journal article" date="1998" name="Proc. Natl. Acad. Sci. U.S.A.">
        <title>Human alpha-endosulfine, a possible regulator of sulfonylurea-sensitive K(ATP) channel: molecular cloning, expression and biological properties.</title>
        <authorList>
            <person name="Heron L."/>
            <person name="Virsolvy A."/>
            <person name="Peyrollier K."/>
            <person name="Gribble F.M."/>
            <person name="Le Cam A."/>
            <person name="Ashcroft F.M."/>
            <person name="Bataille D."/>
        </authorList>
    </citation>
    <scope>NUCLEOTIDE SEQUENCE [MRNA]</scope>
    <source>
        <tissue>Brain</tissue>
    </source>
</reference>
<reference key="2">
    <citation type="journal article" date="1996" name="Diabetologia">
        <title>Endosulfine, endogenous ligand for the sulphonylurea receptor: isolation from porcine brain and partial structural determination of the alpha form.</title>
        <authorList>
            <person name="Virsolvy-Vergine A."/>
            <person name="Salazar G."/>
            <person name="Sillard R."/>
            <person name="Denoroy L."/>
            <person name="Mutt V."/>
            <person name="Bataille D."/>
        </authorList>
    </citation>
    <scope>PROTEIN SEQUENCE OF 25-36; 39-57; 59-74 AND 81-106</scope>
    <scope>MASS SPECTROMETRY</scope>
    <scope>CHARACTERIZATION</scope>
    <source>
        <tissue>Brain</tissue>
    </source>
</reference>
<feature type="initiator methionine" description="Removed" evidence="2">
    <location>
        <position position="1"/>
    </location>
</feature>
<feature type="chain" id="PRO_0000146760" description="Alpha-endosulfine">
    <location>
        <begin position="2"/>
        <end position="121"/>
    </location>
</feature>
<feature type="region of interest" description="Disordered" evidence="3">
    <location>
        <begin position="1"/>
        <end position="53"/>
    </location>
</feature>
<feature type="region of interest" description="Disordered" evidence="3">
    <location>
        <begin position="79"/>
        <end position="121"/>
    </location>
</feature>
<feature type="compositionally biased region" description="Basic and acidic residues" evidence="3">
    <location>
        <begin position="16"/>
        <end position="37"/>
    </location>
</feature>
<feature type="modified residue" description="N-acetylserine" evidence="2">
    <location>
        <position position="2"/>
    </location>
</feature>
<feature type="modified residue" description="Phosphoserine" evidence="2">
    <location>
        <position position="2"/>
    </location>
</feature>
<feature type="modified residue" description="Phosphothreonine" evidence="2">
    <location>
        <position position="21"/>
    </location>
</feature>
<feature type="modified residue" description="Phosphoserine" evidence="2">
    <location>
        <position position="43"/>
    </location>
</feature>
<feature type="modified residue" description="Phosphoserine; by GWL" evidence="1">
    <location>
        <position position="67"/>
    </location>
</feature>
<feature type="modified residue" description="Phosphoserine; by PKA" evidence="2">
    <location>
        <position position="109"/>
    </location>
</feature>
<accession>P68211</accession>
<accession>O97976</accession>
<accession>Q95105</accession>
<comment type="function">
    <text evidence="1">Protein phosphatase inhibitor that specifically inhibits protein phosphatase 2A (PP2A) during mitosis. When phosphorylated at Ser-67 during mitosis, specifically interacts with PPP2R2D (PR55-delta) and inhibits its activity, leading to inactivation of PP2A, an essential condition to keep cyclin-B1-CDK1 activity high during M phase. Also acts as a stimulator of insulin secretion by interacting with sulfonylurea receptor (ABCC8), thereby preventing sulfonylurea from binding to its receptor and reducing K(ATP) channel currents (By similarity).</text>
</comment>
<comment type="subunit">
    <text evidence="1">Interacts (when phosphorylated at Ser-67) with PPP2R2D. Interacts with ABCC8. Interacts with SNCA; interaction is disrupted when phosphorylated at Ser-109 (By similarity).</text>
</comment>
<comment type="subcellular location">
    <subcellularLocation>
        <location evidence="1">Cytoplasm</location>
    </subcellularLocation>
</comment>
<comment type="PTM">
    <text>The N-terminus is blocked.</text>
</comment>
<comment type="PTM">
    <text evidence="1">Phosphorylation at Ser-67 by GWL during mitosis is essential for interaction with PPP2R2D (PR55-delta) and subsequent inactivation of PP2A. Phosphorylated by PKA (By similarity).</text>
</comment>
<comment type="mass spectrometry"/>
<comment type="similarity">
    <text evidence="5">Belongs to the endosulfine family.</text>
</comment>
<protein>
    <recommendedName>
        <fullName>Alpha-endosulfine</fullName>
    </recommendedName>
    <alternativeName>
        <fullName>ARPP-19e</fullName>
    </alternativeName>
</protein>
<gene>
    <name type="primary">ENSA</name>
</gene>
<proteinExistence type="evidence at protein level"/>
<dbReference type="EMBL" id="AJ005987">
    <property type="protein sequence ID" value="CAA06801.1"/>
    <property type="molecule type" value="mRNA"/>
</dbReference>
<dbReference type="RefSeq" id="NP_999339.1">
    <property type="nucleotide sequence ID" value="NM_214174.1"/>
</dbReference>
<dbReference type="BMRB" id="P68211"/>
<dbReference type="SMR" id="P68211"/>
<dbReference type="FunCoup" id="P68211">
    <property type="interactions" value="1190"/>
</dbReference>
<dbReference type="STRING" id="9823.ENSSSCP00000069445"/>
<dbReference type="PaxDb" id="9823-ENSSSCP00000007095"/>
<dbReference type="PeptideAtlas" id="P68211"/>
<dbReference type="GeneID" id="397361"/>
<dbReference type="CTD" id="2029"/>
<dbReference type="eggNOG" id="KOG4076">
    <property type="taxonomic scope" value="Eukaryota"/>
</dbReference>
<dbReference type="InParanoid" id="P68211"/>
<dbReference type="OrthoDB" id="5949865at2759"/>
<dbReference type="Proteomes" id="UP000008227">
    <property type="component" value="Unplaced"/>
</dbReference>
<dbReference type="Proteomes" id="UP000314985">
    <property type="component" value="Unplaced"/>
</dbReference>
<dbReference type="Proteomes" id="UP000694570">
    <property type="component" value="Unplaced"/>
</dbReference>
<dbReference type="Proteomes" id="UP000694571">
    <property type="component" value="Unplaced"/>
</dbReference>
<dbReference type="Proteomes" id="UP000694720">
    <property type="component" value="Unplaced"/>
</dbReference>
<dbReference type="Proteomes" id="UP000694722">
    <property type="component" value="Unplaced"/>
</dbReference>
<dbReference type="Proteomes" id="UP000694723">
    <property type="component" value="Unplaced"/>
</dbReference>
<dbReference type="Proteomes" id="UP000694724">
    <property type="component" value="Unplaced"/>
</dbReference>
<dbReference type="Proteomes" id="UP000694725">
    <property type="component" value="Unplaced"/>
</dbReference>
<dbReference type="Proteomes" id="UP000694726">
    <property type="component" value="Unplaced"/>
</dbReference>
<dbReference type="Proteomes" id="UP000694727">
    <property type="component" value="Unplaced"/>
</dbReference>
<dbReference type="Proteomes" id="UP000694728">
    <property type="component" value="Unplaced"/>
</dbReference>
<dbReference type="GO" id="GO:0005737">
    <property type="term" value="C:cytoplasm"/>
    <property type="evidence" value="ECO:0000318"/>
    <property type="project" value="GO_Central"/>
</dbReference>
<dbReference type="GO" id="GO:0019212">
    <property type="term" value="F:phosphatase inhibitor activity"/>
    <property type="evidence" value="ECO:0000250"/>
    <property type="project" value="UniProtKB"/>
</dbReference>
<dbReference type="GO" id="GO:0051721">
    <property type="term" value="F:protein phosphatase 2A binding"/>
    <property type="evidence" value="ECO:0000250"/>
    <property type="project" value="UniProtKB"/>
</dbReference>
<dbReference type="GO" id="GO:0004864">
    <property type="term" value="F:protein phosphatase inhibitor activity"/>
    <property type="evidence" value="ECO:0000318"/>
    <property type="project" value="GO_Central"/>
</dbReference>
<dbReference type="GO" id="GO:0019888">
    <property type="term" value="F:protein phosphatase regulator activity"/>
    <property type="evidence" value="ECO:0000250"/>
    <property type="project" value="UniProtKB"/>
</dbReference>
<dbReference type="GO" id="GO:0051301">
    <property type="term" value="P:cell division"/>
    <property type="evidence" value="ECO:0007669"/>
    <property type="project" value="UniProtKB-KW"/>
</dbReference>
<dbReference type="GO" id="GO:0000086">
    <property type="term" value="P:G2/M transition of mitotic cell cycle"/>
    <property type="evidence" value="ECO:0000250"/>
    <property type="project" value="UniProtKB"/>
</dbReference>
<dbReference type="GO" id="GO:0000278">
    <property type="term" value="P:mitotic cell cycle"/>
    <property type="evidence" value="ECO:0000250"/>
    <property type="project" value="UniProtKB"/>
</dbReference>
<dbReference type="InterPro" id="IPR006760">
    <property type="entry name" value="Endosulphine"/>
</dbReference>
<dbReference type="PANTHER" id="PTHR10358:SF40">
    <property type="entry name" value="ALPHA-ENDOSULFINE"/>
    <property type="match status" value="1"/>
</dbReference>
<dbReference type="PANTHER" id="PTHR10358">
    <property type="entry name" value="ENDOSULFINE"/>
    <property type="match status" value="1"/>
</dbReference>
<dbReference type="Pfam" id="PF04667">
    <property type="entry name" value="Endosulfine"/>
    <property type="match status" value="1"/>
</dbReference>
<organism>
    <name type="scientific">Sus scrofa</name>
    <name type="common">Pig</name>
    <dbReference type="NCBI Taxonomy" id="9823"/>
    <lineage>
        <taxon>Eukaryota</taxon>
        <taxon>Metazoa</taxon>
        <taxon>Chordata</taxon>
        <taxon>Craniata</taxon>
        <taxon>Vertebrata</taxon>
        <taxon>Euteleostomi</taxon>
        <taxon>Mammalia</taxon>
        <taxon>Eutheria</taxon>
        <taxon>Laurasiatheria</taxon>
        <taxon>Artiodactyla</taxon>
        <taxon>Suina</taxon>
        <taxon>Suidae</taxon>
        <taxon>Sus</taxon>
    </lineage>
</organism>
<sequence>MSQKQEEENPAEETGEEKQDTQEKEGILPEKAEEAKLKAKYPSLGQKPGGSDFLMKRLQKGQKYFDSGDYNMAKAKMKNKQLPSAGPDKNLVTGDHIPTPQDLPQRKSSLVTSKLAGGQVE</sequence>